<comment type="function">
    <text>Electron transport protein for the cytochrome P-450-SU2 system.</text>
</comment>
<comment type="cofactor">
    <cofactor>
        <name>[3Fe-4S] cluster</name>
        <dbReference type="ChEBI" id="CHEBI:21137"/>
    </cofactor>
    <text>Binds 1 [3Fe-4S] cluster.</text>
</comment>
<comment type="induction">
    <text>By herbicides.</text>
</comment>
<dbReference type="EMBL" id="M32239">
    <property type="protein sequence ID" value="AAA26826.1"/>
    <property type="molecule type" value="Genomic_DNA"/>
</dbReference>
<dbReference type="PIR" id="B37915">
    <property type="entry name" value="B37915"/>
</dbReference>
<dbReference type="SMR" id="P18325"/>
<dbReference type="GO" id="GO:0051538">
    <property type="term" value="F:3 iron, 4 sulfur cluster binding"/>
    <property type="evidence" value="ECO:0007669"/>
    <property type="project" value="UniProtKB-KW"/>
</dbReference>
<dbReference type="GO" id="GO:0009055">
    <property type="term" value="F:electron transfer activity"/>
    <property type="evidence" value="ECO:0007669"/>
    <property type="project" value="InterPro"/>
</dbReference>
<dbReference type="GO" id="GO:0005506">
    <property type="term" value="F:iron ion binding"/>
    <property type="evidence" value="ECO:0007669"/>
    <property type="project" value="InterPro"/>
</dbReference>
<dbReference type="Gene3D" id="3.30.70.20">
    <property type="match status" value="1"/>
</dbReference>
<dbReference type="InterPro" id="IPR001080">
    <property type="entry name" value="3Fe4S_ferredoxin"/>
</dbReference>
<dbReference type="InterPro" id="IPR017896">
    <property type="entry name" value="4Fe4S_Fe-S-bd"/>
</dbReference>
<dbReference type="InterPro" id="IPR051269">
    <property type="entry name" value="Fe-S_cluster_ET"/>
</dbReference>
<dbReference type="PANTHER" id="PTHR36923">
    <property type="entry name" value="FERREDOXIN"/>
    <property type="match status" value="1"/>
</dbReference>
<dbReference type="PANTHER" id="PTHR36923:SF3">
    <property type="entry name" value="FERREDOXIN"/>
    <property type="match status" value="1"/>
</dbReference>
<dbReference type="Pfam" id="PF13370">
    <property type="entry name" value="Fer4_13"/>
    <property type="match status" value="1"/>
</dbReference>
<dbReference type="PRINTS" id="PR00352">
    <property type="entry name" value="3FE4SFRDOXIN"/>
</dbReference>
<dbReference type="SUPFAM" id="SSF54862">
    <property type="entry name" value="4Fe-4S ferredoxins"/>
    <property type="match status" value="1"/>
</dbReference>
<dbReference type="PROSITE" id="PS51379">
    <property type="entry name" value="4FE4S_FER_2"/>
    <property type="match status" value="1"/>
</dbReference>
<gene>
    <name type="primary">subB</name>
</gene>
<keyword id="KW-0003">3Fe-4S</keyword>
<keyword id="KW-0903">Direct protein sequencing</keyword>
<keyword id="KW-0249">Electron transport</keyword>
<keyword id="KW-0408">Iron</keyword>
<keyword id="KW-0411">Iron-sulfur</keyword>
<keyword id="KW-0479">Metal-binding</keyword>
<keyword id="KW-0813">Transport</keyword>
<accession>P18325</accession>
<evidence type="ECO:0000250" key="1"/>
<evidence type="ECO:0000255" key="2">
    <source>
        <dbReference type="PROSITE-ProRule" id="PRU00711"/>
    </source>
</evidence>
<feature type="chain" id="PRO_0000159314" description="Ferredoxin-2">
    <location>
        <begin position="1"/>
        <end position="64"/>
    </location>
</feature>
<feature type="domain" description="4Fe-4S ferredoxin-type" evidence="2">
    <location>
        <begin position="2"/>
        <end position="29"/>
    </location>
</feature>
<feature type="binding site" evidence="1">
    <location>
        <position position="10"/>
    </location>
    <ligand>
        <name>[3Fe-4S] cluster</name>
        <dbReference type="ChEBI" id="CHEBI:21137"/>
    </ligand>
</feature>
<feature type="binding site" evidence="1">
    <location>
        <position position="16"/>
    </location>
    <ligand>
        <name>[3Fe-4S] cluster</name>
        <dbReference type="ChEBI" id="CHEBI:21137"/>
    </ligand>
</feature>
<feature type="binding site" evidence="1">
    <location>
        <position position="55"/>
    </location>
    <ligand>
        <name>[3Fe-4S] cluster</name>
        <dbReference type="ChEBI" id="CHEBI:21137"/>
    </ligand>
</feature>
<name>FER2_STRGO</name>
<protein>
    <recommendedName>
        <fullName>Ferredoxin-2</fullName>
        <shortName>Fd-2</shortName>
    </recommendedName>
</protein>
<sequence>MRIHVDQDKCCGAGSCVLAAPDVFDQREEDGIVVLLDTAPPAALHDAVREAATICPAAAITVTD</sequence>
<proteinExistence type="evidence at protein level"/>
<organism>
    <name type="scientific">Streptomyces griseolus</name>
    <dbReference type="NCBI Taxonomy" id="1909"/>
    <lineage>
        <taxon>Bacteria</taxon>
        <taxon>Bacillati</taxon>
        <taxon>Actinomycetota</taxon>
        <taxon>Actinomycetes</taxon>
        <taxon>Kitasatosporales</taxon>
        <taxon>Streptomycetaceae</taxon>
        <taxon>Streptomyces</taxon>
    </lineage>
</organism>
<reference key="1">
    <citation type="journal article" date="1991" name="Biochemistry">
        <title>Ferredoxins from two sulfonylurea herbicide monooxygenase systems in Streptomyces griseolus.</title>
        <authorList>
            <person name="O'Keefe D.P."/>
            <person name="Gibson K.J."/>
            <person name="Emptage M.H."/>
            <person name="Lenstra R."/>
            <person name="Romesser J.A."/>
            <person name="Litle P.J."/>
            <person name="Omer C.A."/>
        </authorList>
    </citation>
    <scope>NUCLEOTIDE SEQUENCE [GENOMIC DNA]</scope>
    <scope>PROTEIN SEQUENCE OF 1-43</scope>
    <source>
        <strain>ATCC 11796 / DSM 40854</strain>
    </source>
</reference>